<feature type="chain" id="PRO_0000377150" description="tRNA dimethylallyltransferase">
    <location>
        <begin position="1"/>
        <end position="318"/>
    </location>
</feature>
<feature type="region of interest" description="Interaction with substrate tRNA" evidence="1">
    <location>
        <begin position="34"/>
        <end position="37"/>
    </location>
</feature>
<feature type="region of interest" description="Interaction with substrate tRNA" evidence="1">
    <location>
        <begin position="158"/>
        <end position="162"/>
    </location>
</feature>
<feature type="binding site" evidence="1">
    <location>
        <begin position="9"/>
        <end position="16"/>
    </location>
    <ligand>
        <name>ATP</name>
        <dbReference type="ChEBI" id="CHEBI:30616"/>
    </ligand>
</feature>
<feature type="binding site" evidence="1">
    <location>
        <begin position="11"/>
        <end position="16"/>
    </location>
    <ligand>
        <name>substrate</name>
    </ligand>
</feature>
<feature type="site" description="Interaction with substrate tRNA" evidence="1">
    <location>
        <position position="100"/>
    </location>
</feature>
<feature type="site" description="Interaction with substrate tRNA" evidence="1">
    <location>
        <position position="122"/>
    </location>
</feature>
<gene>
    <name evidence="1" type="primary">miaA</name>
    <name type="ordered locus">DNO_1117</name>
</gene>
<dbReference type="EC" id="2.5.1.75" evidence="1"/>
<dbReference type="EMBL" id="CP000513">
    <property type="protein sequence ID" value="ABQ13319.1"/>
    <property type="molecule type" value="Genomic_DNA"/>
</dbReference>
<dbReference type="RefSeq" id="WP_012031421.1">
    <property type="nucleotide sequence ID" value="NC_009446.1"/>
</dbReference>
<dbReference type="SMR" id="A5EXM7"/>
<dbReference type="STRING" id="246195.DNO_1117"/>
<dbReference type="KEGG" id="dno:DNO_1117"/>
<dbReference type="eggNOG" id="COG0324">
    <property type="taxonomic scope" value="Bacteria"/>
</dbReference>
<dbReference type="HOGENOM" id="CLU_032616_0_0_6"/>
<dbReference type="OrthoDB" id="9776390at2"/>
<dbReference type="Proteomes" id="UP000000248">
    <property type="component" value="Chromosome"/>
</dbReference>
<dbReference type="GO" id="GO:0005524">
    <property type="term" value="F:ATP binding"/>
    <property type="evidence" value="ECO:0007669"/>
    <property type="project" value="UniProtKB-UniRule"/>
</dbReference>
<dbReference type="GO" id="GO:0052381">
    <property type="term" value="F:tRNA dimethylallyltransferase activity"/>
    <property type="evidence" value="ECO:0007669"/>
    <property type="project" value="UniProtKB-UniRule"/>
</dbReference>
<dbReference type="GO" id="GO:0006400">
    <property type="term" value="P:tRNA modification"/>
    <property type="evidence" value="ECO:0007669"/>
    <property type="project" value="TreeGrafter"/>
</dbReference>
<dbReference type="Gene3D" id="1.10.20.140">
    <property type="match status" value="1"/>
</dbReference>
<dbReference type="Gene3D" id="3.40.50.300">
    <property type="entry name" value="P-loop containing nucleotide triphosphate hydrolases"/>
    <property type="match status" value="1"/>
</dbReference>
<dbReference type="HAMAP" id="MF_00185">
    <property type="entry name" value="IPP_trans"/>
    <property type="match status" value="1"/>
</dbReference>
<dbReference type="InterPro" id="IPR039657">
    <property type="entry name" value="Dimethylallyltransferase"/>
</dbReference>
<dbReference type="InterPro" id="IPR018022">
    <property type="entry name" value="IPT"/>
</dbReference>
<dbReference type="InterPro" id="IPR027417">
    <property type="entry name" value="P-loop_NTPase"/>
</dbReference>
<dbReference type="NCBIfam" id="TIGR00174">
    <property type="entry name" value="miaA"/>
    <property type="match status" value="1"/>
</dbReference>
<dbReference type="PANTHER" id="PTHR11088">
    <property type="entry name" value="TRNA DIMETHYLALLYLTRANSFERASE"/>
    <property type="match status" value="1"/>
</dbReference>
<dbReference type="PANTHER" id="PTHR11088:SF60">
    <property type="entry name" value="TRNA DIMETHYLALLYLTRANSFERASE"/>
    <property type="match status" value="1"/>
</dbReference>
<dbReference type="Pfam" id="PF01715">
    <property type="entry name" value="IPPT"/>
    <property type="match status" value="1"/>
</dbReference>
<dbReference type="SUPFAM" id="SSF52540">
    <property type="entry name" value="P-loop containing nucleoside triphosphate hydrolases"/>
    <property type="match status" value="1"/>
</dbReference>
<comment type="function">
    <text evidence="1">Catalyzes the transfer of a dimethylallyl group onto the adenine at position 37 in tRNAs that read codons beginning with uridine, leading to the formation of N6-(dimethylallyl)adenosine (i(6)A).</text>
</comment>
<comment type="catalytic activity">
    <reaction evidence="1">
        <text>adenosine(37) in tRNA + dimethylallyl diphosphate = N(6)-dimethylallyladenosine(37) in tRNA + diphosphate</text>
        <dbReference type="Rhea" id="RHEA:26482"/>
        <dbReference type="Rhea" id="RHEA-COMP:10162"/>
        <dbReference type="Rhea" id="RHEA-COMP:10375"/>
        <dbReference type="ChEBI" id="CHEBI:33019"/>
        <dbReference type="ChEBI" id="CHEBI:57623"/>
        <dbReference type="ChEBI" id="CHEBI:74411"/>
        <dbReference type="ChEBI" id="CHEBI:74415"/>
        <dbReference type="EC" id="2.5.1.75"/>
    </reaction>
</comment>
<comment type="cofactor">
    <cofactor evidence="1">
        <name>Mg(2+)</name>
        <dbReference type="ChEBI" id="CHEBI:18420"/>
    </cofactor>
</comment>
<comment type="subunit">
    <text evidence="1">Monomer.</text>
</comment>
<comment type="similarity">
    <text evidence="1">Belongs to the IPP transferase family.</text>
</comment>
<protein>
    <recommendedName>
        <fullName evidence="1">tRNA dimethylallyltransferase</fullName>
        <ecNumber evidence="1">2.5.1.75</ecNumber>
    </recommendedName>
    <alternativeName>
        <fullName evidence="1">Dimethylallyl diphosphate:tRNA dimethylallyltransferase</fullName>
        <shortName evidence="1">DMAPP:tRNA dimethylallyltransferase</shortName>
        <shortName evidence="1">DMATase</shortName>
    </alternativeName>
    <alternativeName>
        <fullName evidence="1">Isopentenyl-diphosphate:tRNA isopentenyltransferase</fullName>
        <shortName evidence="1">IPP transferase</shortName>
        <shortName evidence="1">IPPT</shortName>
        <shortName evidence="1">IPTase</shortName>
    </alternativeName>
</protein>
<accession>A5EXM7</accession>
<proteinExistence type="inferred from homology"/>
<name>MIAA_DICNV</name>
<organism>
    <name type="scientific">Dichelobacter nodosus (strain VCS1703A)</name>
    <dbReference type="NCBI Taxonomy" id="246195"/>
    <lineage>
        <taxon>Bacteria</taxon>
        <taxon>Pseudomonadati</taxon>
        <taxon>Pseudomonadota</taxon>
        <taxon>Gammaproteobacteria</taxon>
        <taxon>Cardiobacteriales</taxon>
        <taxon>Cardiobacteriaceae</taxon>
        <taxon>Dichelobacter</taxon>
    </lineage>
</organism>
<sequence length="318" mass="35730">MAAVITLIGATASGKTDLACALYQRFPLRLISVDSAQIYRGMDIGTAKPSAAFLKQYPHDLIDCCEPEEHYSAARFCQDAHQAIAKAHADGKIPLLVGGTMLYYHALFSGLSDLPPADAQLRAEIMAEMHTRGLPALYADLLAYDPEQANKIAANDTQRIIRFTELFRQTGQPPSALFAQQKQAAPTWNSLHLALLPERHLLHQAIAQRFQTMMAAGFLEEVARLKMRPKLTAEHSSMRSVGYRQLWRHLDGEIDLETAVELSIIATRQLAKRQITWLNNRLKTVLSMHFYDPYQAETPNRVFQQVAQFCKHNEGTFL</sequence>
<reference key="1">
    <citation type="journal article" date="2007" name="Nat. Biotechnol.">
        <title>Genome sequence and identification of candidate vaccine antigens from the animal pathogen Dichelobacter nodosus.</title>
        <authorList>
            <person name="Myers G.S.A."/>
            <person name="Parker D."/>
            <person name="Al-Hasani K."/>
            <person name="Kennan R.M."/>
            <person name="Seemann T."/>
            <person name="Ren Q."/>
            <person name="Badger J.H."/>
            <person name="Selengut J.D."/>
            <person name="Deboy R.T."/>
            <person name="Tettelin H."/>
            <person name="Boyce J.D."/>
            <person name="McCarl V.P."/>
            <person name="Han X."/>
            <person name="Nelson W.C."/>
            <person name="Madupu R."/>
            <person name="Mohamoud Y."/>
            <person name="Holley T."/>
            <person name="Fedorova N."/>
            <person name="Khouri H."/>
            <person name="Bottomley S.P."/>
            <person name="Whittington R.J."/>
            <person name="Adler B."/>
            <person name="Songer J.G."/>
            <person name="Rood J.I."/>
            <person name="Paulsen I.T."/>
        </authorList>
    </citation>
    <scope>NUCLEOTIDE SEQUENCE [LARGE SCALE GENOMIC DNA]</scope>
    <source>
        <strain>VCS1703A</strain>
    </source>
</reference>
<evidence type="ECO:0000255" key="1">
    <source>
        <dbReference type="HAMAP-Rule" id="MF_00185"/>
    </source>
</evidence>
<keyword id="KW-0067">ATP-binding</keyword>
<keyword id="KW-0460">Magnesium</keyword>
<keyword id="KW-0547">Nucleotide-binding</keyword>
<keyword id="KW-1185">Reference proteome</keyword>
<keyword id="KW-0808">Transferase</keyword>
<keyword id="KW-0819">tRNA processing</keyword>